<gene>
    <name evidence="1" type="primary">tmk</name>
    <name type="ordered locus">Rpic_1425</name>
</gene>
<reference key="1">
    <citation type="submission" date="2008-05" db="EMBL/GenBank/DDBJ databases">
        <title>Complete sequence of chromosome 1 of Ralstonia pickettii 12J.</title>
        <authorList>
            <person name="Lucas S."/>
            <person name="Copeland A."/>
            <person name="Lapidus A."/>
            <person name="Glavina del Rio T."/>
            <person name="Dalin E."/>
            <person name="Tice H."/>
            <person name="Bruce D."/>
            <person name="Goodwin L."/>
            <person name="Pitluck S."/>
            <person name="Meincke L."/>
            <person name="Brettin T."/>
            <person name="Detter J.C."/>
            <person name="Han C."/>
            <person name="Kuske C.R."/>
            <person name="Schmutz J."/>
            <person name="Larimer F."/>
            <person name="Land M."/>
            <person name="Hauser L."/>
            <person name="Kyrpides N."/>
            <person name="Mikhailova N."/>
            <person name="Marsh T."/>
            <person name="Richardson P."/>
        </authorList>
    </citation>
    <scope>NUCLEOTIDE SEQUENCE [LARGE SCALE GENOMIC DNA]</scope>
    <source>
        <strain>12J</strain>
    </source>
</reference>
<dbReference type="EC" id="2.7.4.9" evidence="1"/>
<dbReference type="EMBL" id="CP001068">
    <property type="protein sequence ID" value="ACD26566.1"/>
    <property type="molecule type" value="Genomic_DNA"/>
</dbReference>
<dbReference type="SMR" id="B2UBZ3"/>
<dbReference type="STRING" id="402626.Rpic_1425"/>
<dbReference type="KEGG" id="rpi:Rpic_1425"/>
<dbReference type="eggNOG" id="COG0125">
    <property type="taxonomic scope" value="Bacteria"/>
</dbReference>
<dbReference type="HOGENOM" id="CLU_049131_0_2_4"/>
<dbReference type="GO" id="GO:0005829">
    <property type="term" value="C:cytosol"/>
    <property type="evidence" value="ECO:0007669"/>
    <property type="project" value="TreeGrafter"/>
</dbReference>
<dbReference type="GO" id="GO:0005524">
    <property type="term" value="F:ATP binding"/>
    <property type="evidence" value="ECO:0007669"/>
    <property type="project" value="UniProtKB-UniRule"/>
</dbReference>
<dbReference type="GO" id="GO:0004798">
    <property type="term" value="F:dTMP kinase activity"/>
    <property type="evidence" value="ECO:0007669"/>
    <property type="project" value="UniProtKB-UniRule"/>
</dbReference>
<dbReference type="GO" id="GO:0006233">
    <property type="term" value="P:dTDP biosynthetic process"/>
    <property type="evidence" value="ECO:0007669"/>
    <property type="project" value="InterPro"/>
</dbReference>
<dbReference type="GO" id="GO:0006235">
    <property type="term" value="P:dTTP biosynthetic process"/>
    <property type="evidence" value="ECO:0007669"/>
    <property type="project" value="UniProtKB-UniRule"/>
</dbReference>
<dbReference type="GO" id="GO:0006227">
    <property type="term" value="P:dUDP biosynthetic process"/>
    <property type="evidence" value="ECO:0007669"/>
    <property type="project" value="TreeGrafter"/>
</dbReference>
<dbReference type="CDD" id="cd01672">
    <property type="entry name" value="TMPK"/>
    <property type="match status" value="1"/>
</dbReference>
<dbReference type="FunFam" id="3.40.50.300:FF:000225">
    <property type="entry name" value="Thymidylate kinase"/>
    <property type="match status" value="1"/>
</dbReference>
<dbReference type="Gene3D" id="3.40.50.300">
    <property type="entry name" value="P-loop containing nucleotide triphosphate hydrolases"/>
    <property type="match status" value="1"/>
</dbReference>
<dbReference type="HAMAP" id="MF_00165">
    <property type="entry name" value="Thymidylate_kinase"/>
    <property type="match status" value="1"/>
</dbReference>
<dbReference type="InterPro" id="IPR027417">
    <property type="entry name" value="P-loop_NTPase"/>
</dbReference>
<dbReference type="InterPro" id="IPR039430">
    <property type="entry name" value="Thymidylate_kin-like_dom"/>
</dbReference>
<dbReference type="InterPro" id="IPR018094">
    <property type="entry name" value="Thymidylate_kinase"/>
</dbReference>
<dbReference type="NCBIfam" id="TIGR00041">
    <property type="entry name" value="DTMP_kinase"/>
    <property type="match status" value="1"/>
</dbReference>
<dbReference type="PANTHER" id="PTHR10344">
    <property type="entry name" value="THYMIDYLATE KINASE"/>
    <property type="match status" value="1"/>
</dbReference>
<dbReference type="PANTHER" id="PTHR10344:SF4">
    <property type="entry name" value="UMP-CMP KINASE 2, MITOCHONDRIAL"/>
    <property type="match status" value="1"/>
</dbReference>
<dbReference type="Pfam" id="PF02223">
    <property type="entry name" value="Thymidylate_kin"/>
    <property type="match status" value="1"/>
</dbReference>
<dbReference type="SUPFAM" id="SSF52540">
    <property type="entry name" value="P-loop containing nucleoside triphosphate hydrolases"/>
    <property type="match status" value="1"/>
</dbReference>
<accession>B2UBZ3</accession>
<comment type="function">
    <text evidence="1">Phosphorylation of dTMP to form dTDP in both de novo and salvage pathways of dTTP synthesis.</text>
</comment>
<comment type="catalytic activity">
    <reaction evidence="1">
        <text>dTMP + ATP = dTDP + ADP</text>
        <dbReference type="Rhea" id="RHEA:13517"/>
        <dbReference type="ChEBI" id="CHEBI:30616"/>
        <dbReference type="ChEBI" id="CHEBI:58369"/>
        <dbReference type="ChEBI" id="CHEBI:63528"/>
        <dbReference type="ChEBI" id="CHEBI:456216"/>
        <dbReference type="EC" id="2.7.4.9"/>
    </reaction>
</comment>
<comment type="similarity">
    <text evidence="1">Belongs to the thymidylate kinase family.</text>
</comment>
<organism>
    <name type="scientific">Ralstonia pickettii (strain 12J)</name>
    <dbReference type="NCBI Taxonomy" id="402626"/>
    <lineage>
        <taxon>Bacteria</taxon>
        <taxon>Pseudomonadati</taxon>
        <taxon>Pseudomonadota</taxon>
        <taxon>Betaproteobacteria</taxon>
        <taxon>Burkholderiales</taxon>
        <taxon>Burkholderiaceae</taxon>
        <taxon>Ralstonia</taxon>
    </lineage>
</organism>
<proteinExistence type="inferred from homology"/>
<name>KTHY_RALPJ</name>
<feature type="chain" id="PRO_1000097420" description="Thymidylate kinase">
    <location>
        <begin position="1"/>
        <end position="205"/>
    </location>
</feature>
<feature type="binding site" evidence="1">
    <location>
        <begin position="10"/>
        <end position="17"/>
    </location>
    <ligand>
        <name>ATP</name>
        <dbReference type="ChEBI" id="CHEBI:30616"/>
    </ligand>
</feature>
<keyword id="KW-0067">ATP-binding</keyword>
<keyword id="KW-0418">Kinase</keyword>
<keyword id="KW-0545">Nucleotide biosynthesis</keyword>
<keyword id="KW-0547">Nucleotide-binding</keyword>
<keyword id="KW-0808">Transferase</keyword>
<sequence>MTGKFITFEGIDGAGKSTHLAWFAQQLQAKLAPLGKKVVVTREPGGTPLGERLREVLLHERMHLETEALLMFASRREHIAEVIQPALDAGDWVISDRFTDATFAYQGGGRGLAIDRLEALEHWVQQGLQPTKTILFDLAPEIAAARLADARTPDKFEAESAQFFLRTRAEYLRRAAAEPDRFVVLNANRERSDIQKDLENLLATL</sequence>
<protein>
    <recommendedName>
        <fullName evidence="1">Thymidylate kinase</fullName>
        <ecNumber evidence="1">2.7.4.9</ecNumber>
    </recommendedName>
    <alternativeName>
        <fullName evidence="1">dTMP kinase</fullName>
    </alternativeName>
</protein>
<evidence type="ECO:0000255" key="1">
    <source>
        <dbReference type="HAMAP-Rule" id="MF_00165"/>
    </source>
</evidence>